<gene>
    <name type="ordered locus">Sbal195_3198</name>
</gene>
<name>Y3198_SHEB9</name>
<evidence type="ECO:0000255" key="1">
    <source>
        <dbReference type="HAMAP-Rule" id="MF_00780"/>
    </source>
</evidence>
<dbReference type="EMBL" id="CP000891">
    <property type="protein sequence ID" value="ABX50360.1"/>
    <property type="molecule type" value="Genomic_DNA"/>
</dbReference>
<dbReference type="RefSeq" id="WP_006085714.1">
    <property type="nucleotide sequence ID" value="NC_009997.1"/>
</dbReference>
<dbReference type="SMR" id="A9KXQ8"/>
<dbReference type="KEGG" id="sbn:Sbal195_3198"/>
<dbReference type="HOGENOM" id="CLU_071003_1_2_6"/>
<dbReference type="Proteomes" id="UP000000770">
    <property type="component" value="Chromosome"/>
</dbReference>
<dbReference type="GO" id="GO:0042597">
    <property type="term" value="C:periplasmic space"/>
    <property type="evidence" value="ECO:0007669"/>
    <property type="project" value="UniProtKB-SubCell"/>
</dbReference>
<dbReference type="Gene3D" id="2.40.128.110">
    <property type="entry name" value="Lipid/polyisoprenoid-binding, YceI-like"/>
    <property type="match status" value="1"/>
</dbReference>
<dbReference type="HAMAP" id="MF_00780">
    <property type="entry name" value="UPF0312"/>
    <property type="match status" value="1"/>
</dbReference>
<dbReference type="InterPro" id="IPR007372">
    <property type="entry name" value="Lipid/polyisoprenoid-bd_YceI"/>
</dbReference>
<dbReference type="InterPro" id="IPR036761">
    <property type="entry name" value="TTHA0802/YceI-like_sf"/>
</dbReference>
<dbReference type="InterPro" id="IPR023480">
    <property type="entry name" value="UPF0312/YceI"/>
</dbReference>
<dbReference type="NCBIfam" id="NF002994">
    <property type="entry name" value="PRK03757.1"/>
    <property type="match status" value="1"/>
</dbReference>
<dbReference type="PANTHER" id="PTHR34406">
    <property type="entry name" value="PROTEIN YCEI"/>
    <property type="match status" value="1"/>
</dbReference>
<dbReference type="PANTHER" id="PTHR34406:SF1">
    <property type="entry name" value="PROTEIN YCEI"/>
    <property type="match status" value="1"/>
</dbReference>
<dbReference type="Pfam" id="PF04264">
    <property type="entry name" value="YceI"/>
    <property type="match status" value="1"/>
</dbReference>
<dbReference type="SMART" id="SM00867">
    <property type="entry name" value="YceI"/>
    <property type="match status" value="1"/>
</dbReference>
<dbReference type="SUPFAM" id="SSF101874">
    <property type="entry name" value="YceI-like"/>
    <property type="match status" value="1"/>
</dbReference>
<proteinExistence type="inferred from homology"/>
<organism>
    <name type="scientific">Shewanella baltica (strain OS195)</name>
    <dbReference type="NCBI Taxonomy" id="399599"/>
    <lineage>
        <taxon>Bacteria</taxon>
        <taxon>Pseudomonadati</taxon>
        <taxon>Pseudomonadota</taxon>
        <taxon>Gammaproteobacteria</taxon>
        <taxon>Alteromonadales</taxon>
        <taxon>Shewanellaceae</taxon>
        <taxon>Shewanella</taxon>
    </lineage>
</organism>
<protein>
    <recommendedName>
        <fullName evidence="1">UPF0312 protein Sbal195_3198</fullName>
    </recommendedName>
</protein>
<comment type="subcellular location">
    <subcellularLocation>
        <location evidence="1">Periplasm</location>
    </subcellularLocation>
</comment>
<comment type="similarity">
    <text evidence="1">Belongs to the UPF0312 family. Type 1 subfamily.</text>
</comment>
<feature type="signal peptide" evidence="1">
    <location>
        <begin position="1"/>
        <end position="22"/>
    </location>
</feature>
<feature type="chain" id="PRO_5000296804" description="UPF0312 protein Sbal195_3198">
    <location>
        <begin position="23"/>
        <end position="191"/>
    </location>
</feature>
<keyword id="KW-0574">Periplasm</keyword>
<keyword id="KW-0732">Signal</keyword>
<sequence>MKKQLFSALIGASLLAPMAASAADYVIDREGAHASITFKVSHLGYSYVVGRFNDFSGDFSYDAAKPTAAKVNVTVNTLSVDSNHAERDKHIRSADFLNTSKFAQATFTSTTVEDKGNGDLVINGNLTLNGVTKPLAINAHAVGEGQDPWGGYRAGFTGTTTFAMKDFGIKMDLGPASSHVELDLVVEGVRK</sequence>
<accession>A9KXQ8</accession>
<reference key="1">
    <citation type="submission" date="2007-11" db="EMBL/GenBank/DDBJ databases">
        <title>Complete sequence of chromosome of Shewanella baltica OS195.</title>
        <authorList>
            <consortium name="US DOE Joint Genome Institute"/>
            <person name="Copeland A."/>
            <person name="Lucas S."/>
            <person name="Lapidus A."/>
            <person name="Barry K."/>
            <person name="Glavina del Rio T."/>
            <person name="Dalin E."/>
            <person name="Tice H."/>
            <person name="Pitluck S."/>
            <person name="Chain P."/>
            <person name="Malfatti S."/>
            <person name="Shin M."/>
            <person name="Vergez L."/>
            <person name="Schmutz J."/>
            <person name="Larimer F."/>
            <person name="Land M."/>
            <person name="Hauser L."/>
            <person name="Kyrpides N."/>
            <person name="Kim E."/>
            <person name="Brettar I."/>
            <person name="Rodrigues J."/>
            <person name="Konstantinidis K."/>
            <person name="Klappenbach J."/>
            <person name="Hofle M."/>
            <person name="Tiedje J."/>
            <person name="Richardson P."/>
        </authorList>
    </citation>
    <scope>NUCLEOTIDE SEQUENCE [LARGE SCALE GENOMIC DNA]</scope>
    <source>
        <strain>OS195</strain>
    </source>
</reference>